<dbReference type="EMBL" id="AB010070">
    <property type="protein sequence ID" value="BAB11439.1"/>
    <property type="molecule type" value="Genomic_DNA"/>
</dbReference>
<dbReference type="EMBL" id="CP002688">
    <property type="protein sequence ID" value="AED91185.1"/>
    <property type="molecule type" value="Genomic_DNA"/>
</dbReference>
<dbReference type="RefSeq" id="NP_196378.1">
    <property type="nucleotide sequence ID" value="NM_120843.1"/>
</dbReference>
<dbReference type="SMR" id="Q9FLS0"/>
<dbReference type="FunCoup" id="Q9FLS0">
    <property type="interactions" value="1171"/>
</dbReference>
<dbReference type="STRING" id="3702.Q9FLS0"/>
<dbReference type="PaxDb" id="3702-AT5G07610.1"/>
<dbReference type="EnsemblPlants" id="AT5G07610.1">
    <property type="protein sequence ID" value="AT5G07610.1"/>
    <property type="gene ID" value="AT5G07610"/>
</dbReference>
<dbReference type="GeneID" id="830654"/>
<dbReference type="Gramene" id="AT5G07610.1">
    <property type="protein sequence ID" value="AT5G07610.1"/>
    <property type="gene ID" value="AT5G07610"/>
</dbReference>
<dbReference type="KEGG" id="ath:AT5G07610"/>
<dbReference type="Araport" id="AT5G07610"/>
<dbReference type="TAIR" id="AT5G07610"/>
<dbReference type="eggNOG" id="ENOG502QQSC">
    <property type="taxonomic scope" value="Eukaryota"/>
</dbReference>
<dbReference type="HOGENOM" id="CLU_043734_0_0_1"/>
<dbReference type="InParanoid" id="Q9FLS0"/>
<dbReference type="OMA" id="IMAYGME"/>
<dbReference type="PhylomeDB" id="Q9FLS0"/>
<dbReference type="PRO" id="PR:Q9FLS0"/>
<dbReference type="Proteomes" id="UP000006548">
    <property type="component" value="Chromosome 5"/>
</dbReference>
<dbReference type="ExpressionAtlas" id="Q9FLS0">
    <property type="expression patterns" value="baseline and differential"/>
</dbReference>
<dbReference type="CDD" id="cd22157">
    <property type="entry name" value="F-box_AtFBW1-like"/>
    <property type="match status" value="1"/>
</dbReference>
<dbReference type="Gene3D" id="1.20.1280.50">
    <property type="match status" value="1"/>
</dbReference>
<dbReference type="Gene3D" id="2.120.10.80">
    <property type="entry name" value="Kelch-type beta propeller"/>
    <property type="match status" value="1"/>
</dbReference>
<dbReference type="InterPro" id="IPR055290">
    <property type="entry name" value="At3g26010-like"/>
</dbReference>
<dbReference type="InterPro" id="IPR056592">
    <property type="entry name" value="At3g26010-like_b-prop"/>
</dbReference>
<dbReference type="InterPro" id="IPR017451">
    <property type="entry name" value="F-box-assoc_interact_dom"/>
</dbReference>
<dbReference type="InterPro" id="IPR036047">
    <property type="entry name" value="F-box-like_dom_sf"/>
</dbReference>
<dbReference type="InterPro" id="IPR001810">
    <property type="entry name" value="F-box_dom"/>
</dbReference>
<dbReference type="InterPro" id="IPR011043">
    <property type="entry name" value="Gal_Oxase/kelch_b-propeller"/>
</dbReference>
<dbReference type="InterPro" id="IPR015915">
    <property type="entry name" value="Kelch-typ_b-propeller"/>
</dbReference>
<dbReference type="NCBIfam" id="TIGR01640">
    <property type="entry name" value="F_box_assoc_1"/>
    <property type="match status" value="1"/>
</dbReference>
<dbReference type="PANTHER" id="PTHR35546:SF25">
    <property type="entry name" value="F-BOX DOMAIN-CONTAINING PROTEIN"/>
    <property type="match status" value="1"/>
</dbReference>
<dbReference type="PANTHER" id="PTHR35546">
    <property type="entry name" value="F-BOX PROTEIN INTERACTION DOMAIN PROTEIN-RELATED"/>
    <property type="match status" value="1"/>
</dbReference>
<dbReference type="Pfam" id="PF24750">
    <property type="entry name" value="b-prop_At3g26010-like"/>
    <property type="match status" value="1"/>
</dbReference>
<dbReference type="Pfam" id="PF00646">
    <property type="entry name" value="F-box"/>
    <property type="match status" value="1"/>
</dbReference>
<dbReference type="SMART" id="SM00256">
    <property type="entry name" value="FBOX"/>
    <property type="match status" value="1"/>
</dbReference>
<dbReference type="SUPFAM" id="SSF81383">
    <property type="entry name" value="F-box domain"/>
    <property type="match status" value="1"/>
</dbReference>
<dbReference type="SUPFAM" id="SSF50965">
    <property type="entry name" value="Galactose oxidase, central domain"/>
    <property type="match status" value="1"/>
</dbReference>
<dbReference type="PROSITE" id="PS50181">
    <property type="entry name" value="FBOX"/>
    <property type="match status" value="1"/>
</dbReference>
<proteinExistence type="evidence at transcript level"/>
<organism>
    <name type="scientific">Arabidopsis thaliana</name>
    <name type="common">Mouse-ear cress</name>
    <dbReference type="NCBI Taxonomy" id="3702"/>
    <lineage>
        <taxon>Eukaryota</taxon>
        <taxon>Viridiplantae</taxon>
        <taxon>Streptophyta</taxon>
        <taxon>Embryophyta</taxon>
        <taxon>Tracheophyta</taxon>
        <taxon>Spermatophyta</taxon>
        <taxon>Magnoliopsida</taxon>
        <taxon>eudicotyledons</taxon>
        <taxon>Gunneridae</taxon>
        <taxon>Pentapetalae</taxon>
        <taxon>rosids</taxon>
        <taxon>malvids</taxon>
        <taxon>Brassicales</taxon>
        <taxon>Brassicaceae</taxon>
        <taxon>Camelineae</taxon>
        <taxon>Arabidopsis</taxon>
    </lineage>
</organism>
<feature type="chain" id="PRO_0000283520" description="F-box protein At5g07610">
    <location>
        <begin position="1"/>
        <end position="420"/>
    </location>
</feature>
<feature type="domain" description="F-box" evidence="1">
    <location>
        <begin position="27"/>
        <end position="77"/>
    </location>
</feature>
<feature type="region of interest" description="Disordered" evidence="2">
    <location>
        <begin position="1"/>
        <end position="25"/>
    </location>
</feature>
<feature type="compositionally biased region" description="Basic residues" evidence="2">
    <location>
        <begin position="7"/>
        <end position="19"/>
    </location>
</feature>
<keyword id="KW-1185">Reference proteome</keyword>
<gene>
    <name type="ordered locus">At5g07610</name>
    <name type="ORF">MBK20.4</name>
</gene>
<protein>
    <recommendedName>
        <fullName>F-box protein At5g07610</fullName>
    </recommendedName>
</protein>
<accession>Q9FLS0</accession>
<evidence type="ECO:0000255" key="1">
    <source>
        <dbReference type="PROSITE-ProRule" id="PRU00080"/>
    </source>
</evidence>
<evidence type="ECO:0000256" key="2">
    <source>
        <dbReference type="SAM" id="MobiDB-lite"/>
    </source>
</evidence>
<name>FB253_ARATH</name>
<reference key="1">
    <citation type="journal article" date="1998" name="DNA Res.">
        <title>Structural analysis of Arabidopsis thaliana chromosome 5. IV. Sequence features of the regions of 1,456,315 bp covered by nineteen physically assigned P1 and TAC clones.</title>
        <authorList>
            <person name="Sato S."/>
            <person name="Kaneko T."/>
            <person name="Kotani H."/>
            <person name="Nakamura Y."/>
            <person name="Asamizu E."/>
            <person name="Miyajima N."/>
            <person name="Tabata S."/>
        </authorList>
    </citation>
    <scope>NUCLEOTIDE SEQUENCE [LARGE SCALE GENOMIC DNA]</scope>
    <source>
        <strain>cv. Columbia</strain>
    </source>
</reference>
<reference key="2">
    <citation type="journal article" date="2017" name="Plant J.">
        <title>Araport11: a complete reannotation of the Arabidopsis thaliana reference genome.</title>
        <authorList>
            <person name="Cheng C.Y."/>
            <person name="Krishnakumar V."/>
            <person name="Chan A.P."/>
            <person name="Thibaud-Nissen F."/>
            <person name="Schobel S."/>
            <person name="Town C.D."/>
        </authorList>
    </citation>
    <scope>GENOME REANNOTATION</scope>
    <source>
        <strain>cv. Columbia</strain>
    </source>
</reference>
<sequence length="420" mass="48312">MSSCSRTRTKAPRSARSRRNGGFSSSSATIVADIDDVLIQILSFLPIKTLLRFKRVSKRWLSLITNPVFSNRVIKSNHPLPISGFFLHSPREIKYSFVSLDDDATNQRISSSLPLWFTDHQTDMIIMQSTNGLLLCKCSCASSNHFNTNYYVYNPTTKQYTLLHQIAGHIALSLAFDPSRSPHYKVFCLRGRSNNSFSSASDSELYHIEVYSSNEGLWRRVVPVPTSPSTFIEFSYSVFWNGAVNWYGFSSRDCLSFDINTQEIKILPLPDHEHEDEPLPDPRILMFLDESQGNLYYIEVNNQSSSNLRVYEMESNSSSWSVKYNVDLEPLAAAFPEMIRTEYYTDRRIYAFSVIGFVKEETDAASYILLHIPNQAVKYNFIDKTFKKLCDFKSLVNDAPEDHFYRFQRTFQFIKSLANV</sequence>